<name>Y445_BORBR</name>
<evidence type="ECO:0000256" key="1">
    <source>
        <dbReference type="SAM" id="MobiDB-lite"/>
    </source>
</evidence>
<evidence type="ECO:0000305" key="2"/>
<feature type="chain" id="PRO_0000218131" description="UPF0339 protein BB0445">
    <location>
        <begin position="1"/>
        <end position="111"/>
    </location>
</feature>
<feature type="repeat" description="1">
    <location>
        <begin position="9"/>
        <end position="57"/>
    </location>
</feature>
<feature type="repeat" description="2">
    <location>
        <begin position="60"/>
        <end position="108"/>
    </location>
</feature>
<feature type="region of interest" description="Disordered" evidence="1">
    <location>
        <begin position="86"/>
        <end position="111"/>
    </location>
</feature>
<gene>
    <name type="ordered locus">BB0445</name>
</gene>
<reference key="1">
    <citation type="journal article" date="2003" name="Nat. Genet.">
        <title>Comparative analysis of the genome sequences of Bordetella pertussis, Bordetella parapertussis and Bordetella bronchiseptica.</title>
        <authorList>
            <person name="Parkhill J."/>
            <person name="Sebaihia M."/>
            <person name="Preston A."/>
            <person name="Murphy L.D."/>
            <person name="Thomson N.R."/>
            <person name="Harris D.E."/>
            <person name="Holden M.T.G."/>
            <person name="Churcher C.M."/>
            <person name="Bentley S.D."/>
            <person name="Mungall K.L."/>
            <person name="Cerdeno-Tarraga A.-M."/>
            <person name="Temple L."/>
            <person name="James K.D."/>
            <person name="Harris B."/>
            <person name="Quail M.A."/>
            <person name="Achtman M."/>
            <person name="Atkin R."/>
            <person name="Baker S."/>
            <person name="Basham D."/>
            <person name="Bason N."/>
            <person name="Cherevach I."/>
            <person name="Chillingworth T."/>
            <person name="Collins M."/>
            <person name="Cronin A."/>
            <person name="Davis P."/>
            <person name="Doggett J."/>
            <person name="Feltwell T."/>
            <person name="Goble A."/>
            <person name="Hamlin N."/>
            <person name="Hauser H."/>
            <person name="Holroyd S."/>
            <person name="Jagels K."/>
            <person name="Leather S."/>
            <person name="Moule S."/>
            <person name="Norberczak H."/>
            <person name="O'Neil S."/>
            <person name="Ormond D."/>
            <person name="Price C."/>
            <person name="Rabbinowitsch E."/>
            <person name="Rutter S."/>
            <person name="Sanders M."/>
            <person name="Saunders D."/>
            <person name="Seeger K."/>
            <person name="Sharp S."/>
            <person name="Simmonds M."/>
            <person name="Skelton J."/>
            <person name="Squares R."/>
            <person name="Squares S."/>
            <person name="Stevens K."/>
            <person name="Unwin L."/>
            <person name="Whitehead S."/>
            <person name="Barrell B.G."/>
            <person name="Maskell D.J."/>
        </authorList>
    </citation>
    <scope>NUCLEOTIDE SEQUENCE [LARGE SCALE GENOMIC DNA]</scope>
    <source>
        <strain>ATCC BAA-588 / NCTC 13252 / RB50</strain>
    </source>
</reference>
<dbReference type="EMBL" id="BX640438">
    <property type="protein sequence ID" value="CAE30943.1"/>
    <property type="molecule type" value="Genomic_DNA"/>
</dbReference>
<dbReference type="RefSeq" id="WP_003807743.1">
    <property type="nucleotide sequence ID" value="NC_002927.3"/>
</dbReference>
<dbReference type="SMR" id="Q7WQ88"/>
<dbReference type="KEGG" id="bbr:BB0445"/>
<dbReference type="eggNOG" id="COG3422">
    <property type="taxonomic scope" value="Bacteria"/>
</dbReference>
<dbReference type="HOGENOM" id="CLU_163886_0_0_4"/>
<dbReference type="Proteomes" id="UP000001027">
    <property type="component" value="Chromosome"/>
</dbReference>
<dbReference type="Gene3D" id="2.30.29.80">
    <property type="match status" value="1"/>
</dbReference>
<dbReference type="InterPro" id="IPR010879">
    <property type="entry name" value="DUF1508"/>
</dbReference>
<dbReference type="InterPro" id="IPR051141">
    <property type="entry name" value="UPF0339_domain"/>
</dbReference>
<dbReference type="InterPro" id="IPR036913">
    <property type="entry name" value="YegP-like_sf"/>
</dbReference>
<dbReference type="PANTHER" id="PTHR40606">
    <property type="match status" value="1"/>
</dbReference>
<dbReference type="PANTHER" id="PTHR40606:SF1">
    <property type="entry name" value="UPF0339 PROTEIN YEGP"/>
    <property type="match status" value="1"/>
</dbReference>
<dbReference type="Pfam" id="PF07411">
    <property type="entry name" value="DUF1508"/>
    <property type="match status" value="2"/>
</dbReference>
<dbReference type="SUPFAM" id="SSF160113">
    <property type="entry name" value="YegP-like"/>
    <property type="match status" value="2"/>
</dbReference>
<comment type="similarity">
    <text evidence="2">Belongs to the UPF0339 family. Duplicated subfamily.</text>
</comment>
<protein>
    <recommendedName>
        <fullName>UPF0339 protein BB0445</fullName>
    </recommendedName>
</protein>
<organism>
    <name type="scientific">Bordetella bronchiseptica (strain ATCC BAA-588 / NCTC 13252 / RB50)</name>
    <name type="common">Alcaligenes bronchisepticus</name>
    <dbReference type="NCBI Taxonomy" id="257310"/>
    <lineage>
        <taxon>Bacteria</taxon>
        <taxon>Pseudomonadati</taxon>
        <taxon>Pseudomonadota</taxon>
        <taxon>Betaproteobacteria</taxon>
        <taxon>Burkholderiales</taxon>
        <taxon>Alcaligenaceae</taxon>
        <taxon>Bordetella</taxon>
    </lineage>
</organism>
<proteinExistence type="inferred from homology"/>
<sequence>MSGYFVLKASGTQYMFNLHAGNHEIILTSERYTSKASAQDGIASVQKNAPDDARYQRLTAKDGSPYFSLTATNGQSIGRSEMYKTTQARDNGIASVKSNAPGAPTKDQTQA</sequence>
<keyword id="KW-0677">Repeat</keyword>
<accession>Q7WQ88</accession>